<comment type="function">
    <text evidence="1">Located at the top of the head of the 30S subunit, it contacts several helices of the 16S rRNA. In the 70S ribosome it contacts the 23S rRNA (bridge B1a) and protein L5 of the 50S subunit (bridge B1b), connecting the 2 subunits; these bridges are implicated in subunit movement. Contacts the tRNAs in the A and P-sites.</text>
</comment>
<comment type="subunit">
    <text evidence="1">Part of the 30S ribosomal subunit. Forms a loose heterodimer with protein S19. Forms two bridges to the 50S subunit in the 70S ribosome.</text>
</comment>
<comment type="similarity">
    <text evidence="1">Belongs to the universal ribosomal protein uS13 family.</text>
</comment>
<accession>Q1JNZ3</accession>
<protein>
    <recommendedName>
        <fullName evidence="1">Small ribosomal subunit protein uS13</fullName>
    </recommendedName>
    <alternativeName>
        <fullName evidence="3">30S ribosomal protein S13</fullName>
    </alternativeName>
</protein>
<name>RS13_STRPC</name>
<proteinExistence type="inferred from homology"/>
<feature type="chain" id="PRO_0000306719" description="Small ribosomal subunit protein uS13">
    <location>
        <begin position="1"/>
        <end position="121"/>
    </location>
</feature>
<feature type="region of interest" description="Disordered" evidence="2">
    <location>
        <begin position="96"/>
        <end position="121"/>
    </location>
</feature>
<feature type="compositionally biased region" description="Basic residues" evidence="2">
    <location>
        <begin position="106"/>
        <end position="121"/>
    </location>
</feature>
<reference key="1">
    <citation type="journal article" date="2006" name="Proc. Natl. Acad. Sci. U.S.A.">
        <title>Molecular genetic anatomy of inter- and intraserotype variation in the human bacterial pathogen group A Streptococcus.</title>
        <authorList>
            <person name="Beres S.B."/>
            <person name="Richter E.W."/>
            <person name="Nagiec M.J."/>
            <person name="Sumby P."/>
            <person name="Porcella S.F."/>
            <person name="DeLeo F.R."/>
            <person name="Musser J.M."/>
        </authorList>
    </citation>
    <scope>NUCLEOTIDE SEQUENCE [LARGE SCALE GENOMIC DNA]</scope>
    <source>
        <strain>MGAS9429</strain>
    </source>
</reference>
<keyword id="KW-0687">Ribonucleoprotein</keyword>
<keyword id="KW-0689">Ribosomal protein</keyword>
<keyword id="KW-0694">RNA-binding</keyword>
<keyword id="KW-0699">rRNA-binding</keyword>
<keyword id="KW-0820">tRNA-binding</keyword>
<organism>
    <name type="scientific">Streptococcus pyogenes serotype M12 (strain MGAS9429)</name>
    <dbReference type="NCBI Taxonomy" id="370551"/>
    <lineage>
        <taxon>Bacteria</taxon>
        <taxon>Bacillati</taxon>
        <taxon>Bacillota</taxon>
        <taxon>Bacilli</taxon>
        <taxon>Lactobacillales</taxon>
        <taxon>Streptococcaceae</taxon>
        <taxon>Streptococcus</taxon>
    </lineage>
</organism>
<gene>
    <name evidence="1" type="primary">rpsM</name>
    <name type="ordered locus">MGAS9429_Spy0068</name>
</gene>
<sequence>MARIAGVDIPNDKRVVISLTYVYGIGLATSKKILAAAGISEDIRVKDLTSDQEDAIRREVDAIKVEGDLRREVNMNIKRLMEIGSYRGIRHRRGLPVRGQNTKNNARTRKGKAVAIAGKKK</sequence>
<evidence type="ECO:0000255" key="1">
    <source>
        <dbReference type="HAMAP-Rule" id="MF_01315"/>
    </source>
</evidence>
<evidence type="ECO:0000256" key="2">
    <source>
        <dbReference type="SAM" id="MobiDB-lite"/>
    </source>
</evidence>
<evidence type="ECO:0000305" key="3"/>
<dbReference type="EMBL" id="CP000259">
    <property type="protein sequence ID" value="ABF31256.1"/>
    <property type="molecule type" value="Genomic_DNA"/>
</dbReference>
<dbReference type="RefSeq" id="WP_002986615.1">
    <property type="nucleotide sequence ID" value="NC_008021.1"/>
</dbReference>
<dbReference type="SMR" id="Q1JNZ3"/>
<dbReference type="GeneID" id="69900050"/>
<dbReference type="KEGG" id="spk:MGAS9429_Spy0068"/>
<dbReference type="HOGENOM" id="CLU_103849_1_1_9"/>
<dbReference type="Proteomes" id="UP000002433">
    <property type="component" value="Chromosome"/>
</dbReference>
<dbReference type="GO" id="GO:0005829">
    <property type="term" value="C:cytosol"/>
    <property type="evidence" value="ECO:0007669"/>
    <property type="project" value="TreeGrafter"/>
</dbReference>
<dbReference type="GO" id="GO:0015935">
    <property type="term" value="C:small ribosomal subunit"/>
    <property type="evidence" value="ECO:0007669"/>
    <property type="project" value="TreeGrafter"/>
</dbReference>
<dbReference type="GO" id="GO:0019843">
    <property type="term" value="F:rRNA binding"/>
    <property type="evidence" value="ECO:0007669"/>
    <property type="project" value="UniProtKB-UniRule"/>
</dbReference>
<dbReference type="GO" id="GO:0003735">
    <property type="term" value="F:structural constituent of ribosome"/>
    <property type="evidence" value="ECO:0007669"/>
    <property type="project" value="InterPro"/>
</dbReference>
<dbReference type="GO" id="GO:0000049">
    <property type="term" value="F:tRNA binding"/>
    <property type="evidence" value="ECO:0007669"/>
    <property type="project" value="UniProtKB-UniRule"/>
</dbReference>
<dbReference type="GO" id="GO:0006412">
    <property type="term" value="P:translation"/>
    <property type="evidence" value="ECO:0007669"/>
    <property type="project" value="UniProtKB-UniRule"/>
</dbReference>
<dbReference type="FunFam" id="1.10.8.50:FF:000001">
    <property type="entry name" value="30S ribosomal protein S13"/>
    <property type="match status" value="1"/>
</dbReference>
<dbReference type="FunFam" id="4.10.910.10:FF:000001">
    <property type="entry name" value="30S ribosomal protein S13"/>
    <property type="match status" value="1"/>
</dbReference>
<dbReference type="Gene3D" id="1.10.8.50">
    <property type="match status" value="1"/>
</dbReference>
<dbReference type="Gene3D" id="4.10.910.10">
    <property type="entry name" value="30s ribosomal protein s13, domain 2"/>
    <property type="match status" value="1"/>
</dbReference>
<dbReference type="HAMAP" id="MF_01315">
    <property type="entry name" value="Ribosomal_uS13"/>
    <property type="match status" value="1"/>
</dbReference>
<dbReference type="InterPro" id="IPR027437">
    <property type="entry name" value="Rbsml_uS13_C"/>
</dbReference>
<dbReference type="InterPro" id="IPR001892">
    <property type="entry name" value="Ribosomal_uS13"/>
</dbReference>
<dbReference type="InterPro" id="IPR010979">
    <property type="entry name" value="Ribosomal_uS13-like_H2TH"/>
</dbReference>
<dbReference type="InterPro" id="IPR019980">
    <property type="entry name" value="Ribosomal_uS13_bac-type"/>
</dbReference>
<dbReference type="InterPro" id="IPR018269">
    <property type="entry name" value="Ribosomal_uS13_CS"/>
</dbReference>
<dbReference type="NCBIfam" id="TIGR03631">
    <property type="entry name" value="uS13_bact"/>
    <property type="match status" value="1"/>
</dbReference>
<dbReference type="PANTHER" id="PTHR10871">
    <property type="entry name" value="30S RIBOSOMAL PROTEIN S13/40S RIBOSOMAL PROTEIN S18"/>
    <property type="match status" value="1"/>
</dbReference>
<dbReference type="PANTHER" id="PTHR10871:SF1">
    <property type="entry name" value="SMALL RIBOSOMAL SUBUNIT PROTEIN US13M"/>
    <property type="match status" value="1"/>
</dbReference>
<dbReference type="Pfam" id="PF00416">
    <property type="entry name" value="Ribosomal_S13"/>
    <property type="match status" value="1"/>
</dbReference>
<dbReference type="PIRSF" id="PIRSF002134">
    <property type="entry name" value="Ribosomal_S13"/>
    <property type="match status" value="1"/>
</dbReference>
<dbReference type="SUPFAM" id="SSF46946">
    <property type="entry name" value="S13-like H2TH domain"/>
    <property type="match status" value="1"/>
</dbReference>
<dbReference type="PROSITE" id="PS00646">
    <property type="entry name" value="RIBOSOMAL_S13_1"/>
    <property type="match status" value="1"/>
</dbReference>
<dbReference type="PROSITE" id="PS50159">
    <property type="entry name" value="RIBOSOMAL_S13_2"/>
    <property type="match status" value="1"/>
</dbReference>